<comment type="catalytic activity">
    <reaction evidence="1">
        <text>1-(2-carboxyphenylamino)-1-deoxy-D-ribulose 5-phosphate + H(+) = (1S,2R)-1-C-(indol-3-yl)glycerol 3-phosphate + CO2 + H2O</text>
        <dbReference type="Rhea" id="RHEA:23476"/>
        <dbReference type="ChEBI" id="CHEBI:15377"/>
        <dbReference type="ChEBI" id="CHEBI:15378"/>
        <dbReference type="ChEBI" id="CHEBI:16526"/>
        <dbReference type="ChEBI" id="CHEBI:58613"/>
        <dbReference type="ChEBI" id="CHEBI:58866"/>
        <dbReference type="EC" id="4.1.1.48"/>
    </reaction>
</comment>
<comment type="pathway">
    <text evidence="1">Amino-acid biosynthesis; L-tryptophan biosynthesis; L-tryptophan from chorismate: step 4/5.</text>
</comment>
<comment type="similarity">
    <text evidence="1">Belongs to the TrpC family.</text>
</comment>
<proteinExistence type="inferred from homology"/>
<accession>B7IM74</accession>
<gene>
    <name evidence="1" type="primary">trpC</name>
    <name type="ordered locus">BCG9842_B4050</name>
</gene>
<feature type="chain" id="PRO_1000117769" description="Indole-3-glycerol phosphate synthase">
    <location>
        <begin position="1"/>
        <end position="253"/>
    </location>
</feature>
<sequence length="253" mass="28320">MGTILDKIVEQKKKEVAELYETYTPVKTKRKTHSLVEALQQFTVIAEVKRASPSKGDINLHVDVRKQVGTYEDCGAGAVSVLTDGQFFKGSFHDLQTAREESNIPLLCKDFIIDKIQIDRAYETGADIILLIVAALTKEKLKELYSYVLEKGLEAIVEVHDEQELETAIQLNPHVIGINNRNLKTFEVDLSQTEKLGKRLNEEKLLWISESGIHSKEDITRVKRAGAKGVLVGEALMTSSSISSFFEDCKVNI</sequence>
<protein>
    <recommendedName>
        <fullName evidence="1">Indole-3-glycerol phosphate synthase</fullName>
        <shortName evidence="1">IGPS</shortName>
        <ecNumber evidence="1">4.1.1.48</ecNumber>
    </recommendedName>
</protein>
<evidence type="ECO:0000255" key="1">
    <source>
        <dbReference type="HAMAP-Rule" id="MF_00134"/>
    </source>
</evidence>
<reference key="1">
    <citation type="submission" date="2008-10" db="EMBL/GenBank/DDBJ databases">
        <title>Genome sequence of Bacillus cereus G9842.</title>
        <authorList>
            <person name="Dodson R.J."/>
            <person name="Durkin A.S."/>
            <person name="Rosovitz M.J."/>
            <person name="Rasko D.A."/>
            <person name="Hoffmaster A."/>
            <person name="Ravel J."/>
            <person name="Sutton G."/>
        </authorList>
    </citation>
    <scope>NUCLEOTIDE SEQUENCE [LARGE SCALE GENOMIC DNA]</scope>
    <source>
        <strain>G9842</strain>
    </source>
</reference>
<name>TRPC_BACC2</name>
<dbReference type="EC" id="4.1.1.48" evidence="1"/>
<dbReference type="EMBL" id="CP001186">
    <property type="protein sequence ID" value="ACK97912.1"/>
    <property type="molecule type" value="Genomic_DNA"/>
</dbReference>
<dbReference type="RefSeq" id="WP_000536711.1">
    <property type="nucleotide sequence ID" value="NC_011772.1"/>
</dbReference>
<dbReference type="SMR" id="B7IM74"/>
<dbReference type="KEGG" id="bcg:BCG9842_B4050"/>
<dbReference type="HOGENOM" id="CLU_034247_2_1_9"/>
<dbReference type="UniPathway" id="UPA00035">
    <property type="reaction ID" value="UER00043"/>
</dbReference>
<dbReference type="Proteomes" id="UP000006744">
    <property type="component" value="Chromosome"/>
</dbReference>
<dbReference type="GO" id="GO:0004425">
    <property type="term" value="F:indole-3-glycerol-phosphate synthase activity"/>
    <property type="evidence" value="ECO:0007669"/>
    <property type="project" value="UniProtKB-UniRule"/>
</dbReference>
<dbReference type="GO" id="GO:0004640">
    <property type="term" value="F:phosphoribosylanthranilate isomerase activity"/>
    <property type="evidence" value="ECO:0007669"/>
    <property type="project" value="TreeGrafter"/>
</dbReference>
<dbReference type="GO" id="GO:0000162">
    <property type="term" value="P:L-tryptophan biosynthetic process"/>
    <property type="evidence" value="ECO:0007669"/>
    <property type="project" value="UniProtKB-UniRule"/>
</dbReference>
<dbReference type="CDD" id="cd00331">
    <property type="entry name" value="IGPS"/>
    <property type="match status" value="1"/>
</dbReference>
<dbReference type="FunFam" id="3.20.20.70:FF:000024">
    <property type="entry name" value="Indole-3-glycerol phosphate synthase"/>
    <property type="match status" value="1"/>
</dbReference>
<dbReference type="Gene3D" id="3.20.20.70">
    <property type="entry name" value="Aldolase class I"/>
    <property type="match status" value="1"/>
</dbReference>
<dbReference type="HAMAP" id="MF_00134_B">
    <property type="entry name" value="IGPS_B"/>
    <property type="match status" value="1"/>
</dbReference>
<dbReference type="InterPro" id="IPR013785">
    <property type="entry name" value="Aldolase_TIM"/>
</dbReference>
<dbReference type="InterPro" id="IPR045186">
    <property type="entry name" value="Indole-3-glycerol_P_synth"/>
</dbReference>
<dbReference type="InterPro" id="IPR013798">
    <property type="entry name" value="Indole-3-glycerol_P_synth_dom"/>
</dbReference>
<dbReference type="InterPro" id="IPR001468">
    <property type="entry name" value="Indole-3-GlycerolPSynthase_CS"/>
</dbReference>
<dbReference type="InterPro" id="IPR011060">
    <property type="entry name" value="RibuloseP-bd_barrel"/>
</dbReference>
<dbReference type="NCBIfam" id="NF001371">
    <property type="entry name" value="PRK00278.1-3"/>
    <property type="match status" value="1"/>
</dbReference>
<dbReference type="NCBIfam" id="NF001377">
    <property type="entry name" value="PRK00278.2-4"/>
    <property type="match status" value="1"/>
</dbReference>
<dbReference type="PANTHER" id="PTHR22854:SF2">
    <property type="entry name" value="INDOLE-3-GLYCEROL-PHOSPHATE SYNTHASE"/>
    <property type="match status" value="1"/>
</dbReference>
<dbReference type="PANTHER" id="PTHR22854">
    <property type="entry name" value="TRYPTOPHAN BIOSYNTHESIS PROTEIN"/>
    <property type="match status" value="1"/>
</dbReference>
<dbReference type="Pfam" id="PF00218">
    <property type="entry name" value="IGPS"/>
    <property type="match status" value="1"/>
</dbReference>
<dbReference type="SUPFAM" id="SSF51366">
    <property type="entry name" value="Ribulose-phoshate binding barrel"/>
    <property type="match status" value="1"/>
</dbReference>
<dbReference type="PROSITE" id="PS00614">
    <property type="entry name" value="IGPS"/>
    <property type="match status" value="1"/>
</dbReference>
<organism>
    <name type="scientific">Bacillus cereus (strain G9842)</name>
    <dbReference type="NCBI Taxonomy" id="405531"/>
    <lineage>
        <taxon>Bacteria</taxon>
        <taxon>Bacillati</taxon>
        <taxon>Bacillota</taxon>
        <taxon>Bacilli</taxon>
        <taxon>Bacillales</taxon>
        <taxon>Bacillaceae</taxon>
        <taxon>Bacillus</taxon>
        <taxon>Bacillus cereus group</taxon>
    </lineage>
</organism>
<keyword id="KW-0028">Amino-acid biosynthesis</keyword>
<keyword id="KW-0057">Aromatic amino acid biosynthesis</keyword>
<keyword id="KW-0210">Decarboxylase</keyword>
<keyword id="KW-0456">Lyase</keyword>
<keyword id="KW-0822">Tryptophan biosynthesis</keyword>